<feature type="chain" id="PRO_0000347110" description="Large ribosomal subunit protein uL30">
    <location>
        <begin position="1"/>
        <end position="59"/>
    </location>
</feature>
<proteinExistence type="inferred from homology"/>
<evidence type="ECO:0000255" key="1">
    <source>
        <dbReference type="HAMAP-Rule" id="MF_01371"/>
    </source>
</evidence>
<evidence type="ECO:0000305" key="2"/>
<name>RL30_LEPBL</name>
<protein>
    <recommendedName>
        <fullName evidence="1">Large ribosomal subunit protein uL30</fullName>
    </recommendedName>
    <alternativeName>
        <fullName evidence="2">50S ribosomal protein L30</fullName>
    </alternativeName>
</protein>
<organism>
    <name type="scientific">Leptospira borgpetersenii serovar Hardjo-bovis (strain L550)</name>
    <dbReference type="NCBI Taxonomy" id="355276"/>
    <lineage>
        <taxon>Bacteria</taxon>
        <taxon>Pseudomonadati</taxon>
        <taxon>Spirochaetota</taxon>
        <taxon>Spirochaetia</taxon>
        <taxon>Leptospirales</taxon>
        <taxon>Leptospiraceae</taxon>
        <taxon>Leptospira</taxon>
    </lineage>
</organism>
<keyword id="KW-0687">Ribonucleoprotein</keyword>
<keyword id="KW-0689">Ribosomal protein</keyword>
<sequence>MENIIVTQVKSSIGVKKEHRLTLHALGLRKTGQQRKHKVSPELQGMLDSVRHLIKVEKA</sequence>
<comment type="subunit">
    <text evidence="1">Part of the 50S ribosomal subunit.</text>
</comment>
<comment type="similarity">
    <text evidence="1">Belongs to the universal ribosomal protein uL30 family.</text>
</comment>
<reference key="1">
    <citation type="journal article" date="2006" name="Proc. Natl. Acad. Sci. U.S.A.">
        <title>Genome reduction in Leptospira borgpetersenii reflects limited transmission potential.</title>
        <authorList>
            <person name="Bulach D.M."/>
            <person name="Zuerner R.L."/>
            <person name="Wilson P."/>
            <person name="Seemann T."/>
            <person name="McGrath A."/>
            <person name="Cullen P.A."/>
            <person name="Davis J."/>
            <person name="Johnson M."/>
            <person name="Kuczek E."/>
            <person name="Alt D.P."/>
            <person name="Peterson-Burch B."/>
            <person name="Coppel R.L."/>
            <person name="Rood J.I."/>
            <person name="Davies J.K."/>
            <person name="Adler B."/>
        </authorList>
    </citation>
    <scope>NUCLEOTIDE SEQUENCE [LARGE SCALE GENOMIC DNA]</scope>
    <source>
        <strain>L550</strain>
    </source>
</reference>
<accession>Q055C6</accession>
<dbReference type="EMBL" id="CP000348">
    <property type="protein sequence ID" value="ABJ78029.1"/>
    <property type="molecule type" value="Genomic_DNA"/>
</dbReference>
<dbReference type="EMBL" id="CP000348">
    <property type="protein sequence ID" value="ABJ78069.1"/>
    <property type="molecule type" value="Genomic_DNA"/>
</dbReference>
<dbReference type="SMR" id="Q055C6"/>
<dbReference type="KEGG" id="lbl:LBL_0431"/>
<dbReference type="KEGG" id="lbl:LBL_0471"/>
<dbReference type="HOGENOM" id="CLU_131047_1_1_12"/>
<dbReference type="GO" id="GO:0022625">
    <property type="term" value="C:cytosolic large ribosomal subunit"/>
    <property type="evidence" value="ECO:0007669"/>
    <property type="project" value="TreeGrafter"/>
</dbReference>
<dbReference type="GO" id="GO:0003735">
    <property type="term" value="F:structural constituent of ribosome"/>
    <property type="evidence" value="ECO:0007669"/>
    <property type="project" value="InterPro"/>
</dbReference>
<dbReference type="GO" id="GO:0006412">
    <property type="term" value="P:translation"/>
    <property type="evidence" value="ECO:0007669"/>
    <property type="project" value="UniProtKB-UniRule"/>
</dbReference>
<dbReference type="CDD" id="cd01658">
    <property type="entry name" value="Ribosomal_L30"/>
    <property type="match status" value="1"/>
</dbReference>
<dbReference type="FunFam" id="3.30.1390.20:FF:000011">
    <property type="entry name" value="50S ribosomal protein L30"/>
    <property type="match status" value="1"/>
</dbReference>
<dbReference type="Gene3D" id="3.30.1390.20">
    <property type="entry name" value="Ribosomal protein L30, ferredoxin-like fold domain"/>
    <property type="match status" value="1"/>
</dbReference>
<dbReference type="HAMAP" id="MF_01371_B">
    <property type="entry name" value="Ribosomal_uL30_B"/>
    <property type="match status" value="1"/>
</dbReference>
<dbReference type="InterPro" id="IPR036919">
    <property type="entry name" value="Ribo_uL30_ferredoxin-like_sf"/>
</dbReference>
<dbReference type="InterPro" id="IPR005996">
    <property type="entry name" value="Ribosomal_uL30_bac-type"/>
</dbReference>
<dbReference type="InterPro" id="IPR018038">
    <property type="entry name" value="Ribosomal_uL30_CS"/>
</dbReference>
<dbReference type="InterPro" id="IPR016082">
    <property type="entry name" value="Ribosomal_uL30_ferredoxin-like"/>
</dbReference>
<dbReference type="NCBIfam" id="TIGR01308">
    <property type="entry name" value="rpmD_bact"/>
    <property type="match status" value="1"/>
</dbReference>
<dbReference type="PANTHER" id="PTHR15892:SF2">
    <property type="entry name" value="LARGE RIBOSOMAL SUBUNIT PROTEIN UL30M"/>
    <property type="match status" value="1"/>
</dbReference>
<dbReference type="PANTHER" id="PTHR15892">
    <property type="entry name" value="MITOCHONDRIAL RIBOSOMAL PROTEIN L30"/>
    <property type="match status" value="1"/>
</dbReference>
<dbReference type="Pfam" id="PF00327">
    <property type="entry name" value="Ribosomal_L30"/>
    <property type="match status" value="1"/>
</dbReference>
<dbReference type="PIRSF" id="PIRSF002211">
    <property type="entry name" value="Ribosomal_L30_bac-type"/>
    <property type="match status" value="1"/>
</dbReference>
<dbReference type="SUPFAM" id="SSF55129">
    <property type="entry name" value="Ribosomal protein L30p/L7e"/>
    <property type="match status" value="1"/>
</dbReference>
<dbReference type="PROSITE" id="PS00634">
    <property type="entry name" value="RIBOSOMAL_L30"/>
    <property type="match status" value="1"/>
</dbReference>
<gene>
    <name evidence="1" type="primary">rpmD1</name>
    <name type="ordered locus">LBL_0431</name>
</gene>
<gene>
    <name evidence="1" type="primary">rpmD2</name>
    <name type="ordered locus">LBL_0471</name>
</gene>